<comment type="function">
    <text evidence="3 4 6 8 9 10 12">Positive regulator of basal resistance and of effector-triggered immunity specifically mediated by TIR-NB-LRR resistance proteins. Disruption by bacterial effector of EDS1-TIR-NB-LRR resistance protein interactions constitutes the first step in resistance activation (PubMed:22158819). Triggers early plant defenses and hypersensitive response independently of PAD4, and then recruits PAD4 to potentiate plant defenses through the accumulation of salicylic acid (PubMed:11574472). Nuclear localization is essential for basal and TIR-NB-LRR-conditioned immunity and for reprogramming defense gene expression, while cytoplasmic EDS1 is required to induce a complete immune response (PubMed:20617163). Heterodimerization with PAD4 or SGA101 is necessary for TNL-mediated effector-triggered immunity (PubMed:24331460). Contributes to nonhost resistance against E.amylovora (PubMed:22316300). Has no direct lipase activity (PubMed:16040633).</text>
</comment>
<comment type="subunit">
    <text evidence="4 5 8 10">Homodimer (PubMed:11574472, PubMed:22158819, PubMed:24331460). Interacts with RPS4, RPS6, SNC1, SRFR1, AvrRps4 and HopA1 (PubMed:22158818, PubMed:22158819). Interacts with PAD4 (via N-terminus) (PubMed:11574472, PubMed:24331460). Interacts with SAG101 (PubMed:16040633, PubMed:24331460). EDS1-SAG101 and EDS1-PAD4 form separate complexes in pathogen-unchallenged cells (PubMed:16040633).</text>
</comment>
<comment type="subcellular location">
    <subcellularLocation>
        <location evidence="5 8">Nucleus</location>
    </subcellularLocation>
    <subcellularLocation>
        <location evidence="5 7 8">Cytoplasm</location>
    </subcellularLocation>
    <subcellularLocation>
        <location evidence="8">Microsome</location>
    </subcellularLocation>
    <text evidence="5 8">Found in both the nucleus and diffuse in the cytosol when associated with PAD4, in the nucleus and in punctate spots in the cytoplasm when interacting with SRFR1, SNC1 or RPS4, only in the nucleus when associated with SAG101 and in the cytosol when it dimerizes. Interacts with AvrRps4 and HopA1 effectors in microsomes.</text>
</comment>
<comment type="induction">
    <text evidence="3">Up-regulated by salicylic acid or upon avirulent bacterial pathogen infection.</text>
</comment>
<comment type="domain">
    <text evidence="10">The N-terminal domain (1-384) is necessary and sufficient for interaction with SAG101.</text>
</comment>
<protein>
    <recommendedName>
        <fullName evidence="11">Protein EDS1L</fullName>
    </recommendedName>
    <alternativeName>
        <fullName>Enhanced disease susceptibility 1-like</fullName>
    </alternativeName>
</protein>
<keyword id="KW-0002">3D-structure</keyword>
<keyword id="KW-0007">Acetylation</keyword>
<keyword id="KW-0963">Cytoplasm</keyword>
<keyword id="KW-0256">Endoplasmic reticulum</keyword>
<keyword id="KW-0378">Hydrolase</keyword>
<keyword id="KW-0492">Microsome</keyword>
<keyword id="KW-0539">Nucleus</keyword>
<keyword id="KW-0611">Plant defense</keyword>
<proteinExistence type="evidence at protein level"/>
<feature type="initiator methionine" description="Removed" evidence="2">
    <location>
        <position position="1"/>
    </location>
</feature>
<feature type="chain" id="PRO_0000431441" description="Protein EDS1L">
    <location>
        <begin position="2"/>
        <end position="623"/>
    </location>
</feature>
<feature type="active site" description="Nucleophile" evidence="1">
    <location>
        <position position="123"/>
    </location>
</feature>
<feature type="active site" description="Charge relay system" evidence="1">
    <location>
        <position position="187"/>
    </location>
</feature>
<feature type="active site" description="Charge relay system" evidence="1">
    <location>
        <position position="317"/>
    </location>
</feature>
<feature type="modified residue" description="N-acetylalanine" evidence="2">
    <location>
        <position position="2"/>
    </location>
</feature>
<feature type="mutagenesis site" description="No effect on basal resistance; when associated with A-123, A-187, M-189 and A-317." evidence="10">
    <original>F</original>
    <variation>W</variation>
    <location>
        <position position="47"/>
    </location>
</feature>
<feature type="mutagenesis site" description="No effect on basal resistance; when associated with A-187 and A-317. No effect on basal resistance; when associated with F-47, A-187, M-189 and A-317." evidence="10">
    <original>S</original>
    <variation>A</variation>
    <location>
        <position position="123"/>
    </location>
</feature>
<feature type="mutagenesis site" description="No effect on basal resistance; when associated with A-123 and A-317. No effect on basal resistance; when associated with F-47, A-123, M-189 and A-317." evidence="10">
    <original>D</original>
    <variation>A</variation>
    <location>
        <position position="187"/>
    </location>
</feature>
<feature type="mutagenesis site" description="No effect on basal resistance; when associated with W-47, A-123, A-187 and A-317." evidence="10">
    <original>V</original>
    <variation>M</variation>
    <location>
        <position position="189"/>
    </location>
</feature>
<feature type="mutagenesis site" description="No effect on interactions with SAG101 or PAD4. Loss of interaction with SAG101 but no effect on homodimerization; when associated with A-258 and A-262, or A-258; A-261 and A-262." evidence="10">
    <original>I</original>
    <variation>A</variation>
    <location>
        <position position="254"/>
    </location>
</feature>
<feature type="mutagenesis site" description="No effect on interactions with SAG101 or PAD4. Strongly reduced interaction with SAG101; when associated with A-262. Loss of interaction with SAG101 but no effect on homodimerization; when associated with A-254 and A-262, or A-254; A-261 and A-262." evidence="10">
    <original>L</original>
    <variation>A</variation>
    <location>
        <position position="258"/>
    </location>
</feature>
<feature type="mutagenesis site" description="No effect on interactions with SAG101 or PAD4. Loss of interaction with SAG101 but no effect on homodimerization; when associated with A-254; A-258 and A-262." evidence="10">
    <original>F</original>
    <variation>A</variation>
    <location>
        <position position="261"/>
    </location>
</feature>
<feature type="mutagenesis site" description="No effect on interactions with SAG101 or PAD4. Strongly reduced interaction with SAG101; when associated with A-258. Loss of interaction with SAG101 but no effect on homodimerization; when associated with A-254 and A-258, or A-254; A-258 and A-261." evidence="10">
    <original>L</original>
    <variation>A</variation>
    <location>
        <position position="262"/>
    </location>
</feature>
<feature type="mutagenesis site" description="No effect on basal resistance; when associated with A-123 and A-187. No effect on basal resistance; when associated with F-47, A-123, A-187 and M-189." evidence="10">
    <original>H</original>
    <variation>A</variation>
    <location>
        <position position="317"/>
    </location>
</feature>
<feature type="helix" evidence="16">
    <location>
        <begin position="4"/>
        <end position="7"/>
    </location>
</feature>
<feature type="helix" evidence="16">
    <location>
        <begin position="11"/>
        <end position="23"/>
    </location>
</feature>
<feature type="helix" evidence="16">
    <location>
        <begin position="24"/>
        <end position="26"/>
    </location>
</feature>
<feature type="strand" evidence="16">
    <location>
        <begin position="27"/>
        <end position="35"/>
    </location>
</feature>
<feature type="strand" evidence="16">
    <location>
        <begin position="38"/>
        <end position="43"/>
    </location>
</feature>
<feature type="helix" evidence="16">
    <location>
        <begin position="49"/>
        <end position="51"/>
    </location>
</feature>
<feature type="strand" evidence="16">
    <location>
        <begin position="63"/>
        <end position="65"/>
    </location>
</feature>
<feature type="turn" evidence="16">
    <location>
        <begin position="68"/>
        <end position="70"/>
    </location>
</feature>
<feature type="turn" evidence="16">
    <location>
        <begin position="77"/>
        <end position="79"/>
    </location>
</feature>
<feature type="strand" evidence="16">
    <location>
        <begin position="84"/>
        <end position="86"/>
    </location>
</feature>
<feature type="helix" evidence="16">
    <location>
        <begin position="87"/>
        <end position="97"/>
    </location>
</feature>
<feature type="helix" evidence="16">
    <location>
        <begin position="99"/>
        <end position="101"/>
    </location>
</feature>
<feature type="helix" evidence="16">
    <location>
        <begin position="103"/>
        <end position="112"/>
    </location>
</feature>
<feature type="strand" evidence="16">
    <location>
        <begin position="116"/>
        <end position="122"/>
    </location>
</feature>
<feature type="helix" evidence="16">
    <location>
        <begin position="124"/>
        <end position="139"/>
    </location>
</feature>
<feature type="helix" evidence="16">
    <location>
        <begin position="141"/>
        <end position="143"/>
    </location>
</feature>
<feature type="turn" evidence="16">
    <location>
        <begin position="147"/>
        <end position="149"/>
    </location>
</feature>
<feature type="strand" evidence="16">
    <location>
        <begin position="152"/>
        <end position="157"/>
    </location>
</feature>
<feature type="helix" evidence="16">
    <location>
        <begin position="164"/>
        <end position="172"/>
    </location>
</feature>
<feature type="helix" evidence="16">
    <location>
        <begin position="176"/>
        <end position="178"/>
    </location>
</feature>
<feature type="strand" evidence="16">
    <location>
        <begin position="179"/>
        <end position="184"/>
    </location>
</feature>
<feature type="helix" evidence="16">
    <location>
        <begin position="189"/>
        <end position="194"/>
    </location>
</feature>
<feature type="turn" evidence="16">
    <location>
        <begin position="197"/>
        <end position="199"/>
    </location>
</feature>
<feature type="turn" evidence="16">
    <location>
        <begin position="201"/>
        <end position="203"/>
    </location>
</feature>
<feature type="helix" evidence="16">
    <location>
        <begin position="204"/>
        <end position="211"/>
    </location>
</feature>
<feature type="helix" evidence="16">
    <location>
        <begin position="222"/>
        <end position="247"/>
    </location>
</feature>
<feature type="helix" evidence="16">
    <location>
        <begin position="252"/>
        <end position="258"/>
    </location>
</feature>
<feature type="helix" evidence="16">
    <location>
        <begin position="259"/>
        <end position="261"/>
    </location>
</feature>
<feature type="strand" evidence="16">
    <location>
        <begin position="271"/>
        <end position="276"/>
    </location>
</feature>
<feature type="strand" evidence="16">
    <location>
        <begin position="278"/>
        <end position="284"/>
    </location>
</feature>
<feature type="helix" evidence="16">
    <location>
        <begin position="287"/>
        <end position="296"/>
    </location>
</feature>
<feature type="strand" evidence="16">
    <location>
        <begin position="301"/>
        <end position="305"/>
    </location>
</feature>
<feature type="turn" evidence="16">
    <location>
        <begin position="306"/>
        <end position="308"/>
    </location>
</feature>
<feature type="helix" evidence="16">
    <location>
        <begin position="309"/>
        <end position="315"/>
    </location>
</feature>
<feature type="helix" evidence="16">
    <location>
        <begin position="316"/>
        <end position="318"/>
    </location>
</feature>
<feature type="helix" evidence="16">
    <location>
        <begin position="320"/>
        <end position="325"/>
    </location>
</feature>
<feature type="helix" evidence="16">
    <location>
        <begin position="327"/>
        <end position="329"/>
    </location>
</feature>
<feature type="strand" evidence="16">
    <location>
        <begin position="330"/>
        <end position="334"/>
    </location>
</feature>
<feature type="helix" evidence="16">
    <location>
        <begin position="335"/>
        <end position="337"/>
    </location>
</feature>
<feature type="helix" evidence="16">
    <location>
        <begin position="342"/>
        <end position="347"/>
    </location>
</feature>
<feature type="helix" evidence="16">
    <location>
        <begin position="352"/>
        <end position="379"/>
    </location>
</feature>
<feature type="helix" evidence="16">
    <location>
        <begin position="382"/>
        <end position="393"/>
    </location>
</feature>
<feature type="helix" evidence="16">
    <location>
        <begin position="395"/>
        <end position="401"/>
    </location>
</feature>
<feature type="helix" evidence="16">
    <location>
        <begin position="405"/>
        <end position="412"/>
    </location>
</feature>
<feature type="helix" evidence="16">
    <location>
        <begin position="416"/>
        <end position="440"/>
    </location>
</feature>
<feature type="helix" evidence="16">
    <location>
        <begin position="448"/>
        <end position="450"/>
    </location>
</feature>
<feature type="helix" evidence="16">
    <location>
        <begin position="452"/>
        <end position="475"/>
    </location>
</feature>
<feature type="helix" evidence="16">
    <location>
        <begin position="478"/>
        <end position="481"/>
    </location>
</feature>
<feature type="helix" evidence="16">
    <location>
        <begin position="485"/>
        <end position="488"/>
    </location>
</feature>
<feature type="helix" evidence="16">
    <location>
        <begin position="492"/>
        <end position="506"/>
    </location>
</feature>
<feature type="helix" evidence="16">
    <location>
        <begin position="507"/>
        <end position="509"/>
    </location>
</feature>
<feature type="helix" evidence="16">
    <location>
        <begin position="513"/>
        <end position="522"/>
    </location>
</feature>
<feature type="helix" evidence="16">
    <location>
        <begin position="530"/>
        <end position="536"/>
    </location>
</feature>
<feature type="turn" evidence="16">
    <location>
        <begin position="537"/>
        <end position="539"/>
    </location>
</feature>
<feature type="helix" evidence="16">
    <location>
        <begin position="541"/>
        <end position="543"/>
    </location>
</feature>
<feature type="helix" evidence="16">
    <location>
        <begin position="545"/>
        <end position="547"/>
    </location>
</feature>
<feature type="helix" evidence="16">
    <location>
        <begin position="548"/>
        <end position="555"/>
    </location>
</feature>
<feature type="turn" evidence="16">
    <location>
        <begin position="560"/>
        <end position="563"/>
    </location>
</feature>
<feature type="helix" evidence="16">
    <location>
        <begin position="564"/>
        <end position="579"/>
    </location>
</feature>
<feature type="turn" evidence="16">
    <location>
        <begin position="585"/>
        <end position="589"/>
    </location>
</feature>
<feature type="helix" evidence="16">
    <location>
        <begin position="594"/>
        <end position="600"/>
    </location>
</feature>
<feature type="helix" evidence="16">
    <location>
        <begin position="604"/>
        <end position="608"/>
    </location>
</feature>
<feature type="helix" evidence="16">
    <location>
        <begin position="613"/>
        <end position="615"/>
    </location>
</feature>
<accession>Q9XF23</accession>
<reference evidence="13" key="1">
    <citation type="journal article" date="1999" name="Proc. Natl. Acad. Sci. U.S.A.">
        <title>EDS1, an essential component of R gene-mediated disease resistance in Arabidopsis has homology to eukaryotic lipases.</title>
        <authorList>
            <person name="Falk A."/>
            <person name="Feys B.J."/>
            <person name="Frost L.N."/>
            <person name="Jones J.D."/>
            <person name="Daniels M.J."/>
            <person name="Parker J.E."/>
        </authorList>
    </citation>
    <scope>NUCLEOTIDE SEQUENCE [GENOMIC DNA]</scope>
    <scope>FUNCTION</scope>
    <scope>INDUCTION BY PATHOGEN AND SALICYLIC ACID</scope>
    <source>
        <strain>cv. Landsberg erecta</strain>
    </source>
</reference>
<reference evidence="14" key="2">
    <citation type="journal article" date="2009" name="Genetics">
        <title>Arabidopsis thaliana genes encoding defense signaling and recognition proteins exhibit contrasting evolutionary dynamics.</title>
        <authorList>
            <person name="Caldwell K.S."/>
            <person name="Michelmore R.W."/>
        </authorList>
    </citation>
    <scope>NUCLEOTIDE SEQUENCE [GENOMIC DNA]</scope>
    <source>
        <strain>cv. Di-0</strain>
        <strain>cv. Landsberg erecta</strain>
    </source>
</reference>
<reference key="3">
    <citation type="journal article" date="2001" name="EMBO J.">
        <title>Direct interaction between the Arabidopsis disease resistance signaling proteins, EDS1 and PAD4.</title>
        <authorList>
            <person name="Feys B.J."/>
            <person name="Moisan L.J."/>
            <person name="Newman M.-A."/>
            <person name="Parker J.E."/>
        </authorList>
    </citation>
    <scope>FUNCTION</scope>
    <scope>INTERACTION WITH PAD4</scope>
    <scope>SUBUNIT</scope>
</reference>
<reference key="4">
    <citation type="journal article" date="2005" name="Plant Cell">
        <title>Arabidopsis SENESCENCE-ASSOCIATED GENE101 stabilizes and signals within an ENHANCED DISEASE SUSCEPTIBILITY1 complex in plant innate immunity.</title>
        <authorList>
            <person name="Feys B.J."/>
            <person name="Wiermer M."/>
            <person name="Bhat R.A."/>
            <person name="Moisan L.J."/>
            <person name="Medina-Escobar N."/>
            <person name="Neu C."/>
            <person name="Cabral A."/>
            <person name="Parker J.E."/>
        </authorList>
    </citation>
    <scope>INTERACTION WITH SAG101 AND PAD4</scope>
    <scope>SUBCELLULAR LOCATION</scope>
</reference>
<reference key="5">
    <citation type="journal article" date="2010" name="PLoS Pathog.">
        <title>Balanced nuclear and cytoplasmic activities of EDS1 are required for a complete plant innate immune response.</title>
        <authorList>
            <person name="Garcia A.V."/>
            <person name="Blanvillain-Baufume S."/>
            <person name="Huibers R.P."/>
            <person name="Wiermer M."/>
            <person name="Li G."/>
            <person name="Gobbato E."/>
            <person name="Rietz S."/>
            <person name="Parker J.E."/>
        </authorList>
    </citation>
    <scope>FUNCTION</scope>
</reference>
<reference key="6">
    <citation type="journal article" date="2011" name="Science">
        <title>Arabidopsis EDS1 connects pathogen effector recognition to cell compartment-specific immune responses.</title>
        <authorList>
            <person name="Heidrich K."/>
            <person name="Wirthmueller L."/>
            <person name="Tasset C."/>
            <person name="Pouzet C."/>
            <person name="Deslandes L."/>
            <person name="Parker J.E."/>
        </authorList>
    </citation>
    <scope>INTERACTION WITH AVRRPS4 AND RPS4</scope>
    <scope>SUBCELLULAR LOCATION</scope>
</reference>
<reference key="7">
    <citation type="journal article" date="2011" name="Science">
        <title>Pathogen effectors target Arabidopsis EDS1 and alter its interactions with immune regulators.</title>
        <authorList>
            <person name="Bhattacharjee S."/>
            <person name="Halane M.K."/>
            <person name="Kim S.H."/>
            <person name="Gassmann W."/>
        </authorList>
    </citation>
    <scope>FUNCTION</scope>
    <scope>INTERACTION WITH RPS4; RPS6; SNC1; SRFR1; AVRRPS4 AND HOPA1</scope>
    <scope>SUBUNIT</scope>
    <scope>SUBCELLULAR LOCATION</scope>
</reference>
<reference key="8">
    <citation type="journal article" date="2012" name="Mol. Plant Microbe Interact.">
        <title>EDS1 contributes to nonhost resistance of Arabidopsis thaliana against Erwinia amylovora.</title>
        <authorList>
            <person name="Moreau M."/>
            <person name="Degrave A."/>
            <person name="Vedel R."/>
            <person name="Bitton F."/>
            <person name="Patrit O."/>
            <person name="Renou J.-P."/>
            <person name="Barny M.-A."/>
            <person name="Fagard M."/>
        </authorList>
    </citation>
    <scope>FUNCTION</scope>
    <source>
        <strain>cv. Columbia</strain>
        <strain>cv. Landsberg erecta</strain>
    </source>
</reference>
<reference key="9">
    <citation type="journal article" date="2011" name="Acta Crystallogr. F">
        <title>Crystallization and preliminary crystallographic analysis of Arabidopsis thaliana EDS1, a key component of plant immunity, in complex with its signalling partner SAG101.</title>
        <authorList>
            <person name="Wagner S."/>
            <person name="Rietz S."/>
            <person name="Parker J.E."/>
            <person name="Niefind K."/>
        </authorList>
    </citation>
    <scope>CRYSTALLIZATION IN COMPLEX WITH SAG101</scope>
</reference>
<reference evidence="15" key="10">
    <citation type="journal article" date="2013" name="Cell Host Microbe">
        <title>Structural basis for signaling by exclusive EDS1 heteromeric complexes with SAG101 or PAD4 in plant innate immunity.</title>
        <authorList>
            <person name="Wagner S."/>
            <person name="Stuttmann J."/>
            <person name="Rietz S."/>
            <person name="Guerois R."/>
            <person name="Brunstein E."/>
            <person name="Bautor J."/>
            <person name="Niefind K."/>
            <person name="Parker J.E."/>
        </authorList>
    </citation>
    <scope>X-RAY CRYSTALLOGRAPHY (2.21 ANGSTROMS) OF 2-623 IN COMPLEX WITH SAG101</scope>
    <scope>INTERACTION WITH SAG101 AND PAD4</scope>
    <scope>DOMAIN</scope>
    <scope>MUTAGENESIS OF PHE-47; SER-123; ASP-187; VAL-189; ILE-254; LEU-258; PHE-261; LEU-262 AND HIS-317</scope>
</reference>
<dbReference type="EMBL" id="AF128407">
    <property type="protein sequence ID" value="AAD20950.1"/>
    <property type="molecule type" value="Genomic_DNA"/>
</dbReference>
<dbReference type="EMBL" id="EF470652">
    <property type="protein sequence ID" value="ABR45991.1"/>
    <property type="molecule type" value="Genomic_DNA"/>
</dbReference>
<dbReference type="EMBL" id="EF470656">
    <property type="protein sequence ID" value="ABR45995.1"/>
    <property type="molecule type" value="Genomic_DNA"/>
</dbReference>
<dbReference type="PIR" id="T48859">
    <property type="entry name" value="T48859"/>
</dbReference>
<dbReference type="PDB" id="4NFU">
    <property type="method" value="X-ray"/>
    <property type="resolution" value="2.21 A"/>
    <property type="chains" value="A=2-623"/>
</dbReference>
<dbReference type="PDB" id="6I8G">
    <property type="method" value="X-ray"/>
    <property type="resolution" value="2.34 A"/>
    <property type="chains" value="A=1-623"/>
</dbReference>
<dbReference type="PDB" id="6I8H">
    <property type="method" value="X-ray"/>
    <property type="resolution" value="3.68 A"/>
    <property type="chains" value="A=1-623"/>
</dbReference>
<dbReference type="PDB" id="6Q6Z">
    <property type="method" value="X-ray"/>
    <property type="resolution" value="3.48 A"/>
    <property type="chains" value="A=1-623"/>
</dbReference>
<dbReference type="PDBsum" id="4NFU"/>
<dbReference type="PDBsum" id="6I8G"/>
<dbReference type="PDBsum" id="6I8H"/>
<dbReference type="PDBsum" id="6Q6Z"/>
<dbReference type="SMR" id="Q9XF23"/>
<dbReference type="ESTHER" id="arath-eds1">
    <property type="family name" value="Plant_lipase_EDS1-like"/>
</dbReference>
<dbReference type="ABCD" id="Q9XF23">
    <property type="antibodies" value="3 sequenced antibodies"/>
</dbReference>
<dbReference type="EvolutionaryTrace" id="Q9XF23"/>
<dbReference type="ExpressionAtlas" id="Q9XF23">
    <property type="expression patterns" value="baseline and differential"/>
</dbReference>
<dbReference type="GO" id="GO:0005783">
    <property type="term" value="C:endoplasmic reticulum"/>
    <property type="evidence" value="ECO:0007669"/>
    <property type="project" value="UniProtKB-KW"/>
</dbReference>
<dbReference type="GO" id="GO:0005634">
    <property type="term" value="C:nucleus"/>
    <property type="evidence" value="ECO:0007669"/>
    <property type="project" value="UniProtKB-SubCell"/>
</dbReference>
<dbReference type="GO" id="GO:0016787">
    <property type="term" value="F:hydrolase activity"/>
    <property type="evidence" value="ECO:0007669"/>
    <property type="project" value="UniProtKB-KW"/>
</dbReference>
<dbReference type="GO" id="GO:0006952">
    <property type="term" value="P:defense response"/>
    <property type="evidence" value="ECO:0007669"/>
    <property type="project" value="UniProtKB-KW"/>
</dbReference>
<dbReference type="GO" id="GO:0006629">
    <property type="term" value="P:lipid metabolic process"/>
    <property type="evidence" value="ECO:0007669"/>
    <property type="project" value="InterPro"/>
</dbReference>
<dbReference type="CDD" id="cd00741">
    <property type="entry name" value="Lipase"/>
    <property type="match status" value="1"/>
</dbReference>
<dbReference type="Gene3D" id="3.40.50.1820">
    <property type="entry name" value="alpha/beta hydrolase"/>
    <property type="match status" value="1"/>
</dbReference>
<dbReference type="InterPro" id="IPR029058">
    <property type="entry name" value="AB_hydrolase_fold"/>
</dbReference>
<dbReference type="InterPro" id="IPR044214">
    <property type="entry name" value="EDS1-like"/>
</dbReference>
<dbReference type="InterPro" id="IPR041266">
    <property type="entry name" value="EDS1_EP"/>
</dbReference>
<dbReference type="InterPro" id="IPR002921">
    <property type="entry name" value="Fungal_lipase-type"/>
</dbReference>
<dbReference type="PANTHER" id="PTHR47090">
    <property type="entry name" value="PROTEIN EDS1-RELATED"/>
    <property type="match status" value="1"/>
</dbReference>
<dbReference type="PANTHER" id="PTHR47090:SF2">
    <property type="entry name" value="PROTEIN EDS1-RELATED"/>
    <property type="match status" value="1"/>
</dbReference>
<dbReference type="Pfam" id="PF18117">
    <property type="entry name" value="EDS1_EP"/>
    <property type="match status" value="1"/>
</dbReference>
<dbReference type="Pfam" id="PF01764">
    <property type="entry name" value="Lipase_3"/>
    <property type="match status" value="1"/>
</dbReference>
<dbReference type="SUPFAM" id="SSF53474">
    <property type="entry name" value="alpha/beta-Hydrolases"/>
    <property type="match status" value="1"/>
</dbReference>
<dbReference type="PROSITE" id="PS00120">
    <property type="entry name" value="LIPASE_SER"/>
    <property type="match status" value="1"/>
</dbReference>
<organism evidence="13">
    <name type="scientific">Arabidopsis thaliana</name>
    <name type="common">Mouse-ear cress</name>
    <dbReference type="NCBI Taxonomy" id="3702"/>
    <lineage>
        <taxon>Eukaryota</taxon>
        <taxon>Viridiplantae</taxon>
        <taxon>Streptophyta</taxon>
        <taxon>Embryophyta</taxon>
        <taxon>Tracheophyta</taxon>
        <taxon>Spermatophyta</taxon>
        <taxon>Magnoliopsida</taxon>
        <taxon>eudicotyledons</taxon>
        <taxon>Gunneridae</taxon>
        <taxon>Pentapetalae</taxon>
        <taxon>rosids</taxon>
        <taxon>malvids</taxon>
        <taxon>Brassicales</taxon>
        <taxon>Brassicaceae</taxon>
        <taxon>Camelineae</taxon>
        <taxon>Arabidopsis</taxon>
    </lineage>
</organism>
<evidence type="ECO:0000250" key="1">
    <source>
        <dbReference type="UniProtKB" id="P19515"/>
    </source>
</evidence>
<evidence type="ECO:0000250" key="2">
    <source>
        <dbReference type="UniProtKB" id="Q9SU72"/>
    </source>
</evidence>
<evidence type="ECO:0000269" key="3">
    <source>
    </source>
</evidence>
<evidence type="ECO:0000269" key="4">
    <source>
    </source>
</evidence>
<evidence type="ECO:0000269" key="5">
    <source>
    </source>
</evidence>
<evidence type="ECO:0000269" key="6">
    <source>
    </source>
</evidence>
<evidence type="ECO:0000269" key="7">
    <source>
    </source>
</evidence>
<evidence type="ECO:0000269" key="8">
    <source>
    </source>
</evidence>
<evidence type="ECO:0000269" key="9">
    <source>
    </source>
</evidence>
<evidence type="ECO:0000269" key="10">
    <source>
    </source>
</evidence>
<evidence type="ECO:0000305" key="11"/>
<evidence type="ECO:0000305" key="12">
    <source>
    </source>
</evidence>
<evidence type="ECO:0000312" key="13">
    <source>
        <dbReference type="EMBL" id="AAD20950.1"/>
    </source>
</evidence>
<evidence type="ECO:0000312" key="14">
    <source>
        <dbReference type="EMBL" id="ABR45991.1"/>
    </source>
</evidence>
<evidence type="ECO:0000312" key="15">
    <source>
        <dbReference type="PDB" id="4NFU"/>
    </source>
</evidence>
<evidence type="ECO:0007829" key="16">
    <source>
        <dbReference type="PDB" id="4NFU"/>
    </source>
</evidence>
<name>EDS1L_ARATH</name>
<sequence length="623" mass="71572">MAFEALTGINGDLITRSWSASKQAYLTERYHKEEAGAVVIFAFQPSFSEKDFFDPDNKSSFGEIKLNRVQFPCMRKIGKGDVATVNEAFLKNLEAVIDPRTSFQASVEMAVRSRKQIVFTGHSSGGATAILATVWYLEKYFIRNPNVYLEPRCVTFGAPLVGDSIFSHALGREKWSRFFVNFVTRFDIVPRITLARKASVEETLPHVLAQLDPRNSSVQESEQRITEFYTSVMRDTSTVANQAVCELTGSAEAILETLSSFLELSPYRPAGTFVFSTEKRLVAVNNSDAILQMLFYTCQASDEQEWSLIPFRSIRDHHSYEELVQSMGMKLFNHLDGENSIESSLNDLGVSTRGRQYVQAALEEEKKRVENQKKIIQVIQQERFLKKLAWIEDEYKPKCQAHKNGYYDSFKVSNEENDFKANVKRAELAGVFDEVLGLLKKCQLPDEFEGDIDWIKLATRYRRLVEPLDIANYHRHLKNEDTGPYMKRGRPTRYIYAQRGYEHHILKPNGMIAEDVFWNKVNGLNLGLQLEEIQETLKNSGSECGSCFWAEVEELKGKPYEEVEVRVKTLEGMLREWITAGEVDEKEIFLEGSTFRKWWITLPKNHKSHSPLRDYMMDEITDT</sequence>
<gene>
    <name evidence="13" type="primary">EDS1</name>
</gene>